<evidence type="ECO:0000255" key="1">
    <source>
        <dbReference type="HAMAP-Rule" id="MF_01208"/>
    </source>
</evidence>
<keyword id="KW-0328">Glycosyltransferase</keyword>
<keyword id="KW-0460">Magnesium</keyword>
<keyword id="KW-0665">Pyrimidine biosynthesis</keyword>
<keyword id="KW-0808">Transferase</keyword>
<feature type="chain" id="PRO_1000138830" description="Orotate phosphoribosyltransferase">
    <location>
        <begin position="1"/>
        <end position="213"/>
    </location>
</feature>
<feature type="binding site" description="in other chain" evidence="1">
    <location>
        <position position="26"/>
    </location>
    <ligand>
        <name>5-phospho-alpha-D-ribose 1-diphosphate</name>
        <dbReference type="ChEBI" id="CHEBI:58017"/>
        <note>ligand shared between dimeric partners</note>
    </ligand>
</feature>
<feature type="binding site" evidence="1">
    <location>
        <begin position="34"/>
        <end position="35"/>
    </location>
    <ligand>
        <name>orotate</name>
        <dbReference type="ChEBI" id="CHEBI:30839"/>
    </ligand>
</feature>
<feature type="binding site" description="in other chain" evidence="1">
    <location>
        <begin position="72"/>
        <end position="73"/>
    </location>
    <ligand>
        <name>5-phospho-alpha-D-ribose 1-diphosphate</name>
        <dbReference type="ChEBI" id="CHEBI:58017"/>
        <note>ligand shared between dimeric partners</note>
    </ligand>
</feature>
<feature type="binding site" evidence="1">
    <location>
        <position position="99"/>
    </location>
    <ligand>
        <name>5-phospho-alpha-D-ribose 1-diphosphate</name>
        <dbReference type="ChEBI" id="CHEBI:58017"/>
        <note>ligand shared between dimeric partners</note>
    </ligand>
</feature>
<feature type="binding site" description="in other chain" evidence="1">
    <location>
        <position position="100"/>
    </location>
    <ligand>
        <name>5-phospho-alpha-D-ribose 1-diphosphate</name>
        <dbReference type="ChEBI" id="CHEBI:58017"/>
        <note>ligand shared between dimeric partners</note>
    </ligand>
</feature>
<feature type="binding site" evidence="1">
    <location>
        <position position="103"/>
    </location>
    <ligand>
        <name>5-phospho-alpha-D-ribose 1-diphosphate</name>
        <dbReference type="ChEBI" id="CHEBI:58017"/>
        <note>ligand shared between dimeric partners</note>
    </ligand>
</feature>
<feature type="binding site" evidence="1">
    <location>
        <position position="105"/>
    </location>
    <ligand>
        <name>5-phospho-alpha-D-ribose 1-diphosphate</name>
        <dbReference type="ChEBI" id="CHEBI:58017"/>
        <note>ligand shared between dimeric partners</note>
    </ligand>
</feature>
<feature type="binding site" description="in other chain" evidence="1">
    <location>
        <begin position="124"/>
        <end position="132"/>
    </location>
    <ligand>
        <name>5-phospho-alpha-D-ribose 1-diphosphate</name>
        <dbReference type="ChEBI" id="CHEBI:58017"/>
        <note>ligand shared between dimeric partners</note>
    </ligand>
</feature>
<feature type="binding site" evidence="1">
    <location>
        <position position="128"/>
    </location>
    <ligand>
        <name>orotate</name>
        <dbReference type="ChEBI" id="CHEBI:30839"/>
    </ligand>
</feature>
<feature type="binding site" evidence="1">
    <location>
        <position position="156"/>
    </location>
    <ligand>
        <name>orotate</name>
        <dbReference type="ChEBI" id="CHEBI:30839"/>
    </ligand>
</feature>
<organism>
    <name type="scientific">Salmonella paratyphi A (strain AKU_12601)</name>
    <dbReference type="NCBI Taxonomy" id="554290"/>
    <lineage>
        <taxon>Bacteria</taxon>
        <taxon>Pseudomonadati</taxon>
        <taxon>Pseudomonadota</taxon>
        <taxon>Gammaproteobacteria</taxon>
        <taxon>Enterobacterales</taxon>
        <taxon>Enterobacteriaceae</taxon>
        <taxon>Salmonella</taxon>
    </lineage>
</organism>
<dbReference type="EC" id="2.4.2.10" evidence="1"/>
<dbReference type="EMBL" id="FM200053">
    <property type="protein sequence ID" value="CAR61614.1"/>
    <property type="molecule type" value="Genomic_DNA"/>
</dbReference>
<dbReference type="RefSeq" id="WP_000806168.1">
    <property type="nucleotide sequence ID" value="NC_011147.1"/>
</dbReference>
<dbReference type="SMR" id="B5BI16"/>
<dbReference type="KEGG" id="sek:SSPA3348"/>
<dbReference type="HOGENOM" id="CLU_074878_0_1_6"/>
<dbReference type="UniPathway" id="UPA00070">
    <property type="reaction ID" value="UER00119"/>
</dbReference>
<dbReference type="Proteomes" id="UP000001869">
    <property type="component" value="Chromosome"/>
</dbReference>
<dbReference type="GO" id="GO:0005737">
    <property type="term" value="C:cytoplasm"/>
    <property type="evidence" value="ECO:0007669"/>
    <property type="project" value="TreeGrafter"/>
</dbReference>
<dbReference type="GO" id="GO:0000287">
    <property type="term" value="F:magnesium ion binding"/>
    <property type="evidence" value="ECO:0007669"/>
    <property type="project" value="UniProtKB-UniRule"/>
</dbReference>
<dbReference type="GO" id="GO:0004588">
    <property type="term" value="F:orotate phosphoribosyltransferase activity"/>
    <property type="evidence" value="ECO:0007669"/>
    <property type="project" value="UniProtKB-UniRule"/>
</dbReference>
<dbReference type="GO" id="GO:0006207">
    <property type="term" value="P:'de novo' pyrimidine nucleobase biosynthetic process"/>
    <property type="evidence" value="ECO:0007669"/>
    <property type="project" value="TreeGrafter"/>
</dbReference>
<dbReference type="GO" id="GO:0044205">
    <property type="term" value="P:'de novo' UMP biosynthetic process"/>
    <property type="evidence" value="ECO:0007669"/>
    <property type="project" value="UniProtKB-UniRule"/>
</dbReference>
<dbReference type="GO" id="GO:0046132">
    <property type="term" value="P:pyrimidine ribonucleoside biosynthetic process"/>
    <property type="evidence" value="ECO:0007669"/>
    <property type="project" value="TreeGrafter"/>
</dbReference>
<dbReference type="CDD" id="cd06223">
    <property type="entry name" value="PRTases_typeI"/>
    <property type="match status" value="1"/>
</dbReference>
<dbReference type="FunFam" id="3.40.50.2020:FF:000008">
    <property type="entry name" value="Orotate phosphoribosyltransferase"/>
    <property type="match status" value="1"/>
</dbReference>
<dbReference type="Gene3D" id="3.40.50.2020">
    <property type="match status" value="1"/>
</dbReference>
<dbReference type="HAMAP" id="MF_01208">
    <property type="entry name" value="PyrE"/>
    <property type="match status" value="1"/>
</dbReference>
<dbReference type="InterPro" id="IPR023031">
    <property type="entry name" value="OPRT"/>
</dbReference>
<dbReference type="InterPro" id="IPR004467">
    <property type="entry name" value="Or_phspho_trans_dom"/>
</dbReference>
<dbReference type="InterPro" id="IPR000836">
    <property type="entry name" value="PRibTrfase_dom"/>
</dbReference>
<dbReference type="InterPro" id="IPR029057">
    <property type="entry name" value="PRTase-like"/>
</dbReference>
<dbReference type="NCBIfam" id="TIGR00336">
    <property type="entry name" value="pyrE"/>
    <property type="match status" value="1"/>
</dbReference>
<dbReference type="PANTHER" id="PTHR46683">
    <property type="entry name" value="OROTATE PHOSPHORIBOSYLTRANSFERASE 1-RELATED"/>
    <property type="match status" value="1"/>
</dbReference>
<dbReference type="PANTHER" id="PTHR46683:SF1">
    <property type="entry name" value="OROTATE PHOSPHORIBOSYLTRANSFERASE 1-RELATED"/>
    <property type="match status" value="1"/>
</dbReference>
<dbReference type="Pfam" id="PF00156">
    <property type="entry name" value="Pribosyltran"/>
    <property type="match status" value="1"/>
</dbReference>
<dbReference type="SUPFAM" id="SSF53271">
    <property type="entry name" value="PRTase-like"/>
    <property type="match status" value="1"/>
</dbReference>
<dbReference type="PROSITE" id="PS00103">
    <property type="entry name" value="PUR_PYR_PR_TRANSFER"/>
    <property type="match status" value="1"/>
</dbReference>
<reference key="1">
    <citation type="journal article" date="2009" name="BMC Genomics">
        <title>Pseudogene accumulation in the evolutionary histories of Salmonella enterica serovars Paratyphi A and Typhi.</title>
        <authorList>
            <person name="Holt K.E."/>
            <person name="Thomson N.R."/>
            <person name="Wain J."/>
            <person name="Langridge G.C."/>
            <person name="Hasan R."/>
            <person name="Bhutta Z.A."/>
            <person name="Quail M.A."/>
            <person name="Norbertczak H."/>
            <person name="Walker D."/>
            <person name="Simmonds M."/>
            <person name="White B."/>
            <person name="Bason N."/>
            <person name="Mungall K."/>
            <person name="Dougan G."/>
            <person name="Parkhill J."/>
        </authorList>
    </citation>
    <scope>NUCLEOTIDE SEQUENCE [LARGE SCALE GENOMIC DNA]</scope>
    <source>
        <strain>AKU_12601</strain>
    </source>
</reference>
<proteinExistence type="inferred from homology"/>
<gene>
    <name evidence="1" type="primary">pyrE</name>
    <name type="ordered locus">SSPA3348</name>
</gene>
<protein>
    <recommendedName>
        <fullName evidence="1">Orotate phosphoribosyltransferase</fullName>
        <shortName evidence="1">OPRT</shortName>
        <shortName evidence="1">OPRTase</shortName>
        <ecNumber evidence="1">2.4.2.10</ecNumber>
    </recommendedName>
</protein>
<name>PYRE_SALPK</name>
<accession>B5BI16</accession>
<sequence>MKPYQRQFIEFALNKQVLKFGEFTLKSGRKSPYFFNAGLFNTGRDLALLGRFYAEALVDSGIEFDLLFGPAYKGIPIATTTAVALAEHHDKDLPYCFNRKEAKDHGEGGSLVGSALQGRVMLVDDVITAGTAIRESMEIIQAHRATLAGVLISLDRQERGRGEISAIQEVERDYGCKVISIITLKDLIAYLEEKLDMAEHLAAVRAYREEFGV</sequence>
<comment type="function">
    <text evidence="1">Catalyzes the transfer of a ribosyl phosphate group from 5-phosphoribose 1-diphosphate to orotate, leading to the formation of orotidine monophosphate (OMP).</text>
</comment>
<comment type="catalytic activity">
    <reaction evidence="1">
        <text>orotidine 5'-phosphate + diphosphate = orotate + 5-phospho-alpha-D-ribose 1-diphosphate</text>
        <dbReference type="Rhea" id="RHEA:10380"/>
        <dbReference type="ChEBI" id="CHEBI:30839"/>
        <dbReference type="ChEBI" id="CHEBI:33019"/>
        <dbReference type="ChEBI" id="CHEBI:57538"/>
        <dbReference type="ChEBI" id="CHEBI:58017"/>
        <dbReference type="EC" id="2.4.2.10"/>
    </reaction>
</comment>
<comment type="cofactor">
    <cofactor evidence="1">
        <name>Mg(2+)</name>
        <dbReference type="ChEBI" id="CHEBI:18420"/>
    </cofactor>
</comment>
<comment type="pathway">
    <text evidence="1">Pyrimidine metabolism; UMP biosynthesis via de novo pathway; UMP from orotate: step 1/2.</text>
</comment>
<comment type="subunit">
    <text evidence="1">Homodimer.</text>
</comment>
<comment type="similarity">
    <text evidence="1">Belongs to the purine/pyrimidine phosphoribosyltransferase family. PyrE subfamily.</text>
</comment>